<dbReference type="EMBL" id="U88049">
    <property type="protein sequence ID" value="AAB47769.1"/>
    <property type="molecule type" value="Genomic_DNA"/>
</dbReference>
<dbReference type="EMBL" id="AL123456">
    <property type="protein sequence ID" value="CCP44883.1"/>
    <property type="molecule type" value="Genomic_DNA"/>
</dbReference>
<dbReference type="PIR" id="G70511">
    <property type="entry name" value="G70511"/>
</dbReference>
<dbReference type="RefSeq" id="WP_003900467.1">
    <property type="nucleotide sequence ID" value="NZ_NVQJ01000058.1"/>
</dbReference>
<dbReference type="RefSeq" id="YP_177859.1">
    <property type="nucleotide sequence ID" value="NC_000962.3"/>
</dbReference>
<dbReference type="SMR" id="P9WI01"/>
<dbReference type="STRING" id="83332.Rv2108"/>
<dbReference type="PaxDb" id="83332-Rv2108"/>
<dbReference type="DNASU" id="887814"/>
<dbReference type="GeneID" id="887814"/>
<dbReference type="KEGG" id="mtu:Rv2108"/>
<dbReference type="KEGG" id="mtv:RVBD_2108"/>
<dbReference type="TubercuList" id="Rv2108"/>
<dbReference type="eggNOG" id="COG5651">
    <property type="taxonomic scope" value="Bacteria"/>
</dbReference>
<dbReference type="InParanoid" id="P9WI01"/>
<dbReference type="OrthoDB" id="4753774at2"/>
<dbReference type="PhylomeDB" id="P9WI01"/>
<dbReference type="Proteomes" id="UP000001584">
    <property type="component" value="Chromosome"/>
</dbReference>
<dbReference type="GO" id="GO:0005886">
    <property type="term" value="C:plasma membrane"/>
    <property type="evidence" value="ECO:0007669"/>
    <property type="project" value="UniProtKB-SubCell"/>
</dbReference>
<dbReference type="GO" id="GO:0052572">
    <property type="term" value="P:response to host immune response"/>
    <property type="evidence" value="ECO:0000318"/>
    <property type="project" value="GO_Central"/>
</dbReference>
<dbReference type="Gene3D" id="1.20.1260.20">
    <property type="entry name" value="PPE superfamily"/>
    <property type="match status" value="1"/>
</dbReference>
<dbReference type="InterPro" id="IPR000030">
    <property type="entry name" value="PPE_dom"/>
</dbReference>
<dbReference type="InterPro" id="IPR038332">
    <property type="entry name" value="PPE_sf"/>
</dbReference>
<dbReference type="PANTHER" id="PTHR46766">
    <property type="entry name" value="GLUTAMINE-RICH PROTEIN 2"/>
    <property type="match status" value="1"/>
</dbReference>
<dbReference type="PANTHER" id="PTHR46766:SF1">
    <property type="entry name" value="GLUTAMINE-RICH PROTEIN 2"/>
    <property type="match status" value="1"/>
</dbReference>
<dbReference type="Pfam" id="PF00823">
    <property type="entry name" value="PPE"/>
    <property type="match status" value="1"/>
</dbReference>
<dbReference type="SUPFAM" id="SSF140459">
    <property type="entry name" value="PE/PPE dimer-like"/>
    <property type="match status" value="1"/>
</dbReference>
<protein>
    <recommendedName>
        <fullName>Uncharacterized PPE family protein PPE36</fullName>
    </recommendedName>
</protein>
<organism>
    <name type="scientific">Mycobacterium tuberculosis (strain ATCC 25618 / H37Rv)</name>
    <dbReference type="NCBI Taxonomy" id="83332"/>
    <lineage>
        <taxon>Bacteria</taxon>
        <taxon>Bacillati</taxon>
        <taxon>Actinomycetota</taxon>
        <taxon>Actinomycetes</taxon>
        <taxon>Mycobacteriales</taxon>
        <taxon>Mycobacteriaceae</taxon>
        <taxon>Mycobacterium</taxon>
        <taxon>Mycobacterium tuberculosis complex</taxon>
    </lineage>
</organism>
<gene>
    <name type="primary">PPE36</name>
    <name type="synonym">p27</name>
    <name type="ordered locus">Rv2108</name>
</gene>
<evidence type="ECO:0000269" key="1">
    <source>
    </source>
</evidence>
<evidence type="ECO:0000305" key="2"/>
<reference key="1">
    <citation type="journal article" date="2000" name="Mol. Cell. Probes">
        <title>Cloning of a gene from Mycobacterium tuberculosis coding for a hypothetical 27 kDa protein and its use for the specific PCR identification of these mycobacteria.</title>
        <authorList>
            <person name="Chevrier D."/>
            <person name="Casademont I."/>
            <person name="Guesdon J.-L."/>
        </authorList>
    </citation>
    <scope>NUCLEOTIDE SEQUENCE [GENOMIC DNA]</scope>
    <source>
        <strain>ATCC 25618 / H37Rv</strain>
    </source>
</reference>
<reference key="2">
    <citation type="journal article" date="1998" name="Nature">
        <title>Deciphering the biology of Mycobacterium tuberculosis from the complete genome sequence.</title>
        <authorList>
            <person name="Cole S.T."/>
            <person name="Brosch R."/>
            <person name="Parkhill J."/>
            <person name="Garnier T."/>
            <person name="Churcher C.M."/>
            <person name="Harris D.E."/>
            <person name="Gordon S.V."/>
            <person name="Eiglmeier K."/>
            <person name="Gas S."/>
            <person name="Barry C.E. III"/>
            <person name="Tekaia F."/>
            <person name="Badcock K."/>
            <person name="Basham D."/>
            <person name="Brown D."/>
            <person name="Chillingworth T."/>
            <person name="Connor R."/>
            <person name="Davies R.M."/>
            <person name="Devlin K."/>
            <person name="Feltwell T."/>
            <person name="Gentles S."/>
            <person name="Hamlin N."/>
            <person name="Holroyd S."/>
            <person name="Hornsby T."/>
            <person name="Jagels K."/>
            <person name="Krogh A."/>
            <person name="McLean J."/>
            <person name="Moule S."/>
            <person name="Murphy L.D."/>
            <person name="Oliver S."/>
            <person name="Osborne J."/>
            <person name="Quail M.A."/>
            <person name="Rajandream M.A."/>
            <person name="Rogers J."/>
            <person name="Rutter S."/>
            <person name="Seeger K."/>
            <person name="Skelton S."/>
            <person name="Squares S."/>
            <person name="Squares R."/>
            <person name="Sulston J.E."/>
            <person name="Taylor K."/>
            <person name="Whitehead S."/>
            <person name="Barrell B.G."/>
        </authorList>
    </citation>
    <scope>NUCLEOTIDE SEQUENCE [LARGE SCALE GENOMIC DNA]</scope>
    <source>
        <strain>ATCC 25618 / H37Rv</strain>
    </source>
</reference>
<reference key="3">
    <citation type="journal article" date="2005" name="Tuberculosis">
        <title>Expression, immunochemical characterization and localization of the Mycobacterium tuberculosis protein p27.</title>
        <authorList>
            <person name="Le Moigne V."/>
            <person name="Robreau G."/>
            <person name="Borot C."/>
            <person name="Guesdon J.-L."/>
            <person name="Mahana W."/>
        </authorList>
    </citation>
    <scope>PROTEIN SEQUENCE OF N-TERMINUS</scope>
    <scope>EXPRESSION</scope>
    <scope>SUBCELLULAR LOCATION</scope>
</reference>
<reference key="4">
    <citation type="journal article" date="2008" name="Mol. Immunol.">
        <title>Flagellin as a good carrier and potent adjuvant for Th1 response: study of mice immune response to the p27 (Rv2108) Mycobacterium tuberculosis antigen.</title>
        <authorList>
            <person name="Le Moigne V."/>
            <person name="Robreau G."/>
            <person name="Mahana W."/>
        </authorList>
    </citation>
    <scope>PROTEIN SEQUENCE OF N-TERMINUS</scope>
    <scope>EXPRESSION</scope>
</reference>
<keyword id="KW-1003">Cell membrane</keyword>
<keyword id="KW-0903">Direct protein sequencing</keyword>
<keyword id="KW-0472">Membrane</keyword>
<keyword id="KW-1185">Reference proteome</keyword>
<accession>P9WI01</accession>
<accession>L0TA84</accession>
<accession>P95315</accession>
<accession>Q79FH5</accession>
<accession>Q7D7I4</accession>
<comment type="subcellular location">
    <subcellularLocation>
        <location evidence="1">Cell membrane</location>
    </subcellularLocation>
</comment>
<comment type="miscellaneous">
    <text>Protein expressed in vitro is immunologically active and reacts with antibodies from tuberculosis patient sera. Could provide a specific complementary diagnostic test for the presence of and infection with M.tuberculosis.</text>
</comment>
<comment type="similarity">
    <text evidence="2">Belongs to the mycobacterial PPE family.</text>
</comment>
<feature type="chain" id="PRO_0000379113" description="Uncharacterized PPE family protein PPE36">
    <location>
        <begin position="1"/>
        <end position="243"/>
    </location>
</feature>
<name>PPE36_MYCTU</name>
<sequence length="243" mass="27480">MPNFWALPPEINSTRIYLGPGSGPILAAAQGWNALASELEKTKVGLQSALDTLLESYRGQSSQALIQQTLPYVQWLTTTAEHAHKTAIQLTAAANAYEQARAAMVPPAMVRANRVQTTVLKAINWFGQFSTRIADKEADYEQMWFQDALVMENYWEAVQEAIQSTSHFEDPPEMADDYDEAWMLNTVFDYHNENAKEEVIHLVPDVNKERGPIELVTKVDKEGTIRLVYDGEPTFSYKEHPKF</sequence>
<proteinExistence type="evidence at protein level"/>